<feature type="chain" id="PRO_0000307170" description="Mannose-1-phosphate guanylyltransferase catalytic subunit beta">
    <location>
        <begin position="1"/>
        <end position="365"/>
    </location>
</feature>
<feature type="region of interest" description="Substrate-binding domain" evidence="2">
    <location>
        <begin position="2"/>
        <end position="221"/>
    </location>
</feature>
<feature type="region of interest" description="Hexapeptide repeat domain" evidence="2">
    <location>
        <begin position="244"/>
        <end position="365"/>
    </location>
</feature>
<feature type="active site" evidence="2">
    <location>
        <position position="161"/>
    </location>
</feature>
<feature type="binding site" evidence="2">
    <location>
        <position position="109"/>
    </location>
    <ligand>
        <name>GDP-alpha-D-mannose</name>
        <dbReference type="ChEBI" id="CHEBI:57527"/>
    </ligand>
</feature>
<feature type="binding site" evidence="2">
    <location>
        <position position="109"/>
    </location>
    <ligand>
        <name>Mg(2+)</name>
        <dbReference type="ChEBI" id="CHEBI:18420"/>
    </ligand>
</feature>
<feature type="binding site" evidence="2">
    <location>
        <position position="217"/>
    </location>
    <ligand>
        <name>GDP-alpha-D-mannose</name>
        <dbReference type="ChEBI" id="CHEBI:57527"/>
    </ligand>
</feature>
<feature type="binding site" evidence="2">
    <location>
        <position position="217"/>
    </location>
    <ligand>
        <name>Mg(2+)</name>
        <dbReference type="ChEBI" id="CHEBI:18420"/>
    </ligand>
</feature>
<evidence type="ECO:0000250" key="1">
    <source>
        <dbReference type="UniProtKB" id="P0C5I2"/>
    </source>
</evidence>
<evidence type="ECO:0000250" key="2">
    <source>
        <dbReference type="UniProtKB" id="Q9Y5P6"/>
    </source>
</evidence>
<evidence type="ECO:0000305" key="3"/>
<evidence type="ECO:0000312" key="4">
    <source>
        <dbReference type="Proteomes" id="UP000001940"/>
    </source>
</evidence>
<proteinExistence type="inferred from homology"/>
<protein>
    <recommendedName>
        <fullName evidence="3">Mannose-1-phosphate guanylyltransferase catalytic subunit beta</fullName>
        <ecNumber evidence="1">2.7.7.13</ecNumber>
    </recommendedName>
    <alternativeName>
        <fullName>GDP-mannose pyrophosphorylase B</fullName>
        <shortName evidence="3">GMPPB</shortName>
    </alternativeName>
    <alternativeName>
        <fullName>GTP-mannose-1-phosphate guanylyltransferase beta</fullName>
    </alternativeName>
</protein>
<comment type="function">
    <text evidence="1 2">Catalytic subunit of the GMPPA-GMPPB mannose-1-phosphate guanylyltransferase complex (By similarity). Catalyzes the formation of GDP-mannose, an essential precursor of glycan moieties of glycoproteins and glycolipids (By similarity). Can catalyze the reverse reaction in vitro (By similarity). Together with GMPPA regulates GDP-alpha-D-mannose levels (By similarity).</text>
</comment>
<comment type="catalytic activity">
    <reaction evidence="1">
        <text>alpha-D-mannose 1-phosphate + GTP + H(+) = GDP-alpha-D-mannose + diphosphate</text>
        <dbReference type="Rhea" id="RHEA:15229"/>
        <dbReference type="ChEBI" id="CHEBI:15378"/>
        <dbReference type="ChEBI" id="CHEBI:33019"/>
        <dbReference type="ChEBI" id="CHEBI:37565"/>
        <dbReference type="ChEBI" id="CHEBI:57527"/>
        <dbReference type="ChEBI" id="CHEBI:58409"/>
        <dbReference type="EC" id="2.7.7.13"/>
    </reaction>
    <physiologicalReaction direction="left-to-right" evidence="2">
        <dbReference type="Rhea" id="RHEA:15230"/>
    </physiologicalReaction>
    <physiologicalReaction direction="right-to-left" evidence="2">
        <dbReference type="Rhea" id="RHEA:15231"/>
    </physiologicalReaction>
</comment>
<comment type="cofactor">
    <cofactor evidence="2">
        <name>Mg(2+)</name>
        <dbReference type="ChEBI" id="CHEBI:18420"/>
    </cofactor>
    <text evidence="2">Coordinates binding with substrate and required for enzymatic activity.</text>
</comment>
<comment type="activity regulation">
    <text evidence="2">Enzyme activity is reduced by incorporation into the GMPPA-GMPPB mannose-1-phosphate guanylyltransferase complex. Allosterically inhibited, when part of the GMPPA-GMPPB complex, by GDP-alpha-D-mannose binding to GMPPA.</text>
</comment>
<comment type="pathway">
    <text evidence="1">Nucleotide-sugar biosynthesis; GDP-alpha-D-mannose biosynthesis; GDP-alpha-D-mannose from alpha-D-mannose 1-phosphate (GTP route): step 1/1.</text>
</comment>
<comment type="subunit">
    <text evidence="2">Component of the GMPPA-GMPPB mannose-1-phosphate guanylyltransferase complex composed of 4 GMPPA subunits and 8 tag-335/GMPPB subunits; the complex is organized into three layers, a central layer made up of 2 GMPPA dimers sandwiched between two layers each made up of 2 tag-335/GMPPB dimers. Catalytic activity of tag-335/GMPPB is reduced when part of the complex and binding of GDP-alpha-D-Mannose by GMPPA induces allosteric feedback inhibition of tag-335/GMPPB.</text>
</comment>
<comment type="domain">
    <text evidence="2">The N-terminal substrate-binding domain adopts a Rossman-like fold and has a binding pocket for GTP or GDP-alpha-D-mannose (By similarity). Substrate binding is coordinated by an Mg(2+) ion (By similarity).</text>
</comment>
<comment type="domain">
    <text evidence="2">The C-terminal domain consists of a series of tandem hexapeptide repeats that adopt a beta-helix conformation (By similarity). The beta-helix forms several protein interaction surfaces involved in assembly of the GMPPA-GMPPB mannose-1-phosphate guanylyltransferase complex (By similarity).</text>
</comment>
<comment type="similarity">
    <text evidence="3">Belongs to the transferase hexapeptide repeat family.</text>
</comment>
<dbReference type="EC" id="2.7.7.13" evidence="1"/>
<dbReference type="EMBL" id="CU457741">
    <property type="protein sequence ID" value="CAM36360.1"/>
    <property type="molecule type" value="Genomic_DNA"/>
</dbReference>
<dbReference type="RefSeq" id="NP_502333.2">
    <property type="nucleotide sequence ID" value="NM_069932.7"/>
</dbReference>
<dbReference type="SMR" id="A3QMC8"/>
<dbReference type="BioGRID" id="48228">
    <property type="interactions" value="5"/>
</dbReference>
<dbReference type="FunCoup" id="A3QMC8">
    <property type="interactions" value="2393"/>
</dbReference>
<dbReference type="STRING" id="6239.C42C1.5.2"/>
<dbReference type="PaxDb" id="6239-C42C1.5"/>
<dbReference type="PeptideAtlas" id="A3QMC8"/>
<dbReference type="EnsemblMetazoa" id="C42C1.5.1">
    <property type="protein sequence ID" value="C42C1.5.1"/>
    <property type="gene ID" value="WBGene00016583"/>
</dbReference>
<dbReference type="EnsemblMetazoa" id="C42C1.5.2">
    <property type="protein sequence ID" value="C42C1.5.2"/>
    <property type="gene ID" value="WBGene00016583"/>
</dbReference>
<dbReference type="GeneID" id="183400"/>
<dbReference type="KEGG" id="cel:CELE_C42C1.5"/>
<dbReference type="UCSC" id="C42C1.5">
    <property type="organism name" value="c. elegans"/>
</dbReference>
<dbReference type="AGR" id="WB:WBGene00016583"/>
<dbReference type="CTD" id="183400"/>
<dbReference type="WormBase" id="C42C1.5">
    <property type="protein sequence ID" value="CE40443"/>
    <property type="gene ID" value="WBGene00016583"/>
    <property type="gene designation" value="tag-335"/>
</dbReference>
<dbReference type="eggNOG" id="KOG1322">
    <property type="taxonomic scope" value="Eukaryota"/>
</dbReference>
<dbReference type="GeneTree" id="ENSGT00940000158909"/>
<dbReference type="HOGENOM" id="CLU_029499_0_0_1"/>
<dbReference type="InParanoid" id="A3QMC8"/>
<dbReference type="OMA" id="GPNCWIC"/>
<dbReference type="OrthoDB" id="1733332at2759"/>
<dbReference type="PhylomeDB" id="A3QMC8"/>
<dbReference type="Reactome" id="R-CEL-446205">
    <property type="pathway name" value="Synthesis of GDP-mannose"/>
</dbReference>
<dbReference type="UniPathway" id="UPA00126">
    <property type="reaction ID" value="UER00930"/>
</dbReference>
<dbReference type="PRO" id="PR:A3QMC8"/>
<dbReference type="Proteomes" id="UP000001940">
    <property type="component" value="Chromosome IV"/>
</dbReference>
<dbReference type="Bgee" id="WBGene00016583">
    <property type="expression patterns" value="Expressed in adult organism and 4 other cell types or tissues"/>
</dbReference>
<dbReference type="GO" id="GO:0005737">
    <property type="term" value="C:cytoplasm"/>
    <property type="evidence" value="ECO:0000318"/>
    <property type="project" value="GO_Central"/>
</dbReference>
<dbReference type="GO" id="GO:0005525">
    <property type="term" value="F:GTP binding"/>
    <property type="evidence" value="ECO:0007669"/>
    <property type="project" value="UniProtKB-KW"/>
</dbReference>
<dbReference type="GO" id="GO:0004475">
    <property type="term" value="F:mannose-1-phosphate guanylyltransferase (GTP) activity"/>
    <property type="evidence" value="ECO:0000318"/>
    <property type="project" value="GO_Central"/>
</dbReference>
<dbReference type="GO" id="GO:0046872">
    <property type="term" value="F:metal ion binding"/>
    <property type="evidence" value="ECO:0007669"/>
    <property type="project" value="UniProtKB-KW"/>
</dbReference>
<dbReference type="GO" id="GO:0009298">
    <property type="term" value="P:GDP-mannose biosynthetic process"/>
    <property type="evidence" value="ECO:0000318"/>
    <property type="project" value="GO_Central"/>
</dbReference>
<dbReference type="GO" id="GO:0036498">
    <property type="term" value="P:IRE1-mediated unfolded protein response"/>
    <property type="evidence" value="ECO:0007007"/>
    <property type="project" value="WormBase"/>
</dbReference>
<dbReference type="GO" id="GO:0006486">
    <property type="term" value="P:protein glycosylation"/>
    <property type="evidence" value="ECO:0000318"/>
    <property type="project" value="GO_Central"/>
</dbReference>
<dbReference type="CDD" id="cd06425">
    <property type="entry name" value="M1P_guanylylT_B_like_N"/>
    <property type="match status" value="1"/>
</dbReference>
<dbReference type="FunFam" id="3.90.550.10:FF:000013">
    <property type="entry name" value="mannose-1-phosphate guanyltransferase beta"/>
    <property type="match status" value="1"/>
</dbReference>
<dbReference type="Gene3D" id="2.160.10.10">
    <property type="entry name" value="Hexapeptide repeat proteins"/>
    <property type="match status" value="1"/>
</dbReference>
<dbReference type="Gene3D" id="3.90.550.10">
    <property type="entry name" value="Spore Coat Polysaccharide Biosynthesis Protein SpsA, Chain A"/>
    <property type="match status" value="1"/>
</dbReference>
<dbReference type="InterPro" id="IPR056729">
    <property type="entry name" value="GMPPB_C"/>
</dbReference>
<dbReference type="InterPro" id="IPR045233">
    <property type="entry name" value="GMPPB_N"/>
</dbReference>
<dbReference type="InterPro" id="IPR018357">
    <property type="entry name" value="Hexapep_transf_CS"/>
</dbReference>
<dbReference type="InterPro" id="IPR050486">
    <property type="entry name" value="Mannose-1P_guanyltransferase"/>
</dbReference>
<dbReference type="InterPro" id="IPR005835">
    <property type="entry name" value="NTP_transferase_dom"/>
</dbReference>
<dbReference type="InterPro" id="IPR029044">
    <property type="entry name" value="Nucleotide-diphossugar_trans"/>
</dbReference>
<dbReference type="PANTHER" id="PTHR22572">
    <property type="entry name" value="SUGAR-1-PHOSPHATE GUANYL TRANSFERASE"/>
    <property type="match status" value="1"/>
</dbReference>
<dbReference type="Pfam" id="PF25087">
    <property type="entry name" value="GMPPB_C"/>
    <property type="match status" value="1"/>
</dbReference>
<dbReference type="Pfam" id="PF00483">
    <property type="entry name" value="NTP_transferase"/>
    <property type="match status" value="1"/>
</dbReference>
<dbReference type="SUPFAM" id="SSF53448">
    <property type="entry name" value="Nucleotide-diphospho-sugar transferases"/>
    <property type="match status" value="1"/>
</dbReference>
<dbReference type="PROSITE" id="PS00101">
    <property type="entry name" value="HEXAPEP_TRANSFERASES"/>
    <property type="match status" value="1"/>
</dbReference>
<reference key="1">
    <citation type="journal article" date="1998" name="Science">
        <title>Genome sequence of the nematode C. elegans: a platform for investigating biology.</title>
        <authorList>
            <consortium name="The C. elegans sequencing consortium"/>
        </authorList>
    </citation>
    <scope>NUCLEOTIDE SEQUENCE [LARGE SCALE GENOMIC DNA]</scope>
    <source>
        <strain>Bristol N2</strain>
    </source>
</reference>
<gene>
    <name type="primary">tag-335</name>
    <name type="ORF">C42C1.5</name>
</gene>
<organism evidence="4">
    <name type="scientific">Caenorhabditis elegans</name>
    <dbReference type="NCBI Taxonomy" id="6239"/>
    <lineage>
        <taxon>Eukaryota</taxon>
        <taxon>Metazoa</taxon>
        <taxon>Ecdysozoa</taxon>
        <taxon>Nematoda</taxon>
        <taxon>Chromadorea</taxon>
        <taxon>Rhabditida</taxon>
        <taxon>Rhabditina</taxon>
        <taxon>Rhabditomorpha</taxon>
        <taxon>Rhabditoidea</taxon>
        <taxon>Rhabditidae</taxon>
        <taxon>Peloderinae</taxon>
        <taxon>Caenorhabditis</taxon>
    </lineage>
</organism>
<sequence length="365" mass="40099">MKALILVGGYGTRLRPLTLTQPKPLVEFANKPMMLHQMEALAEVGVDTVVLAVSYRAEQLEQEMTVHADRLGVKLIFSLEEEPLGTAGPLALARKHLEGDAPFFVLNSDVICDFPFKQMVEFHKNHGKEGTIAVTKVEEPSKYGVVVFDQDKGKIDDFVEKPQEYVGNKINAGLYIFSSKILDRIPLKPTSIEKEIFPEMAFSGNLYAFVLPGFWMDVGQPKDFLKGMSLFLNHCHTTKSDKLETGSNIHPTATIRGNVMVDPSATVGENCVIGPDVVIGPRVKIEGGVRILHSTILSDSSIGNYSWVSGSIVGRKCHIGSWVRIENICVIGDDVVVKDELYLNGASVLPHKSIAVNVPSKDIIM</sequence>
<accession>A3QMC8</accession>
<name>GMPPB_CAEEL</name>
<keyword id="KW-0342">GTP-binding</keyword>
<keyword id="KW-0460">Magnesium</keyword>
<keyword id="KW-0479">Metal-binding</keyword>
<keyword id="KW-0547">Nucleotide-binding</keyword>
<keyword id="KW-0548">Nucleotidyltransferase</keyword>
<keyword id="KW-1185">Reference proteome</keyword>
<keyword id="KW-0808">Transferase</keyword>